<evidence type="ECO:0000250" key="1"/>
<evidence type="ECO:0000255" key="2">
    <source>
        <dbReference type="PROSITE-ProRule" id="PRU00159"/>
    </source>
</evidence>
<evidence type="ECO:0000255" key="3">
    <source>
        <dbReference type="PROSITE-ProRule" id="PRU10027"/>
    </source>
</evidence>
<evidence type="ECO:0000256" key="4">
    <source>
        <dbReference type="SAM" id="MobiDB-lite"/>
    </source>
</evidence>
<evidence type="ECO:0000305" key="5"/>
<dbReference type="EC" id="2.7.11.22"/>
<dbReference type="EC" id="2.7.11.23"/>
<dbReference type="EMBL" id="CR382130">
    <property type="protein sequence ID" value="CAG81370.1"/>
    <property type="molecule type" value="Genomic_DNA"/>
</dbReference>
<dbReference type="RefSeq" id="XP_503170.1">
    <property type="nucleotide sequence ID" value="XM_503170.1"/>
</dbReference>
<dbReference type="SMR" id="Q6C842"/>
<dbReference type="STRING" id="284591.Q6C842"/>
<dbReference type="EnsemblFungi" id="CAG81370">
    <property type="protein sequence ID" value="CAG81370"/>
    <property type="gene ID" value="YALI0_D22935g"/>
</dbReference>
<dbReference type="KEGG" id="yli:2911247"/>
<dbReference type="VEuPathDB" id="FungiDB:YALI0_D22935g"/>
<dbReference type="HOGENOM" id="CLU_000288_181_21_1"/>
<dbReference type="InParanoid" id="Q6C842"/>
<dbReference type="OMA" id="CAYLHES"/>
<dbReference type="OrthoDB" id="64702at4891"/>
<dbReference type="Proteomes" id="UP000001300">
    <property type="component" value="Chromosome D"/>
</dbReference>
<dbReference type="GO" id="GO:0005634">
    <property type="term" value="C:nucleus"/>
    <property type="evidence" value="ECO:0000318"/>
    <property type="project" value="GO_Central"/>
</dbReference>
<dbReference type="GO" id="GO:0005524">
    <property type="term" value="F:ATP binding"/>
    <property type="evidence" value="ECO:0007669"/>
    <property type="project" value="UniProtKB-KW"/>
</dbReference>
<dbReference type="GO" id="GO:0004693">
    <property type="term" value="F:cyclin-dependent protein serine/threonine kinase activity"/>
    <property type="evidence" value="ECO:0000318"/>
    <property type="project" value="GO_Central"/>
</dbReference>
<dbReference type="GO" id="GO:0106310">
    <property type="term" value="F:protein serine kinase activity"/>
    <property type="evidence" value="ECO:0007669"/>
    <property type="project" value="RHEA"/>
</dbReference>
<dbReference type="GO" id="GO:0008353">
    <property type="term" value="F:RNA polymerase II CTD heptapeptide repeat kinase activity"/>
    <property type="evidence" value="ECO:0007669"/>
    <property type="project" value="UniProtKB-EC"/>
</dbReference>
<dbReference type="GO" id="GO:0032968">
    <property type="term" value="P:positive regulation of transcription elongation by RNA polymerase II"/>
    <property type="evidence" value="ECO:0000318"/>
    <property type="project" value="GO_Central"/>
</dbReference>
<dbReference type="CDD" id="cd07866">
    <property type="entry name" value="STKc_BUR1"/>
    <property type="match status" value="1"/>
</dbReference>
<dbReference type="FunFam" id="1.10.510.10:FF:000415">
    <property type="entry name" value="CMGC/CDK/CRK7 protein kinase, variant"/>
    <property type="match status" value="1"/>
</dbReference>
<dbReference type="FunFam" id="3.30.200.20:FF:000514">
    <property type="entry name" value="Serine/threonine-protein kinase BUR1"/>
    <property type="match status" value="1"/>
</dbReference>
<dbReference type="Gene3D" id="3.30.200.20">
    <property type="entry name" value="Phosphorylase Kinase, domain 1"/>
    <property type="match status" value="1"/>
</dbReference>
<dbReference type="Gene3D" id="1.10.510.10">
    <property type="entry name" value="Transferase(Phosphotransferase) domain 1"/>
    <property type="match status" value="1"/>
</dbReference>
<dbReference type="InterPro" id="IPR050108">
    <property type="entry name" value="CDK"/>
</dbReference>
<dbReference type="InterPro" id="IPR011009">
    <property type="entry name" value="Kinase-like_dom_sf"/>
</dbReference>
<dbReference type="InterPro" id="IPR000719">
    <property type="entry name" value="Prot_kinase_dom"/>
</dbReference>
<dbReference type="InterPro" id="IPR017441">
    <property type="entry name" value="Protein_kinase_ATP_BS"/>
</dbReference>
<dbReference type="InterPro" id="IPR008271">
    <property type="entry name" value="Ser/Thr_kinase_AS"/>
</dbReference>
<dbReference type="PANTHER" id="PTHR24056">
    <property type="entry name" value="CELL DIVISION PROTEIN KINASE"/>
    <property type="match status" value="1"/>
</dbReference>
<dbReference type="PANTHER" id="PTHR24056:SF233">
    <property type="entry name" value="CYCLIN-DEPENDENT KINASE 9"/>
    <property type="match status" value="1"/>
</dbReference>
<dbReference type="Pfam" id="PF00069">
    <property type="entry name" value="Pkinase"/>
    <property type="match status" value="1"/>
</dbReference>
<dbReference type="SMART" id="SM00220">
    <property type="entry name" value="S_TKc"/>
    <property type="match status" value="1"/>
</dbReference>
<dbReference type="SUPFAM" id="SSF56112">
    <property type="entry name" value="Protein kinase-like (PK-like)"/>
    <property type="match status" value="1"/>
</dbReference>
<dbReference type="PROSITE" id="PS00107">
    <property type="entry name" value="PROTEIN_KINASE_ATP"/>
    <property type="match status" value="1"/>
</dbReference>
<dbReference type="PROSITE" id="PS50011">
    <property type="entry name" value="PROTEIN_KINASE_DOM"/>
    <property type="match status" value="1"/>
</dbReference>
<dbReference type="PROSITE" id="PS00108">
    <property type="entry name" value="PROTEIN_KINASE_ST"/>
    <property type="match status" value="1"/>
</dbReference>
<feature type="chain" id="PRO_0000085686" description="Serine/threonine-protein kinase BUR1">
    <location>
        <begin position="1"/>
        <end position="706"/>
    </location>
</feature>
<feature type="domain" description="Protein kinase" evidence="2">
    <location>
        <begin position="38"/>
        <end position="339"/>
    </location>
</feature>
<feature type="region of interest" description="Disordered" evidence="4">
    <location>
        <begin position="360"/>
        <end position="706"/>
    </location>
</feature>
<feature type="compositionally biased region" description="Basic and acidic residues" evidence="4">
    <location>
        <begin position="360"/>
        <end position="523"/>
    </location>
</feature>
<feature type="compositionally biased region" description="Basic and acidic residues" evidence="4">
    <location>
        <begin position="545"/>
        <end position="570"/>
    </location>
</feature>
<feature type="compositionally biased region" description="Basic and acidic residues" evidence="4">
    <location>
        <begin position="594"/>
        <end position="623"/>
    </location>
</feature>
<feature type="compositionally biased region" description="Pro residues" evidence="4">
    <location>
        <begin position="625"/>
        <end position="648"/>
    </location>
</feature>
<feature type="compositionally biased region" description="Basic and acidic residues" evidence="4">
    <location>
        <begin position="659"/>
        <end position="706"/>
    </location>
</feature>
<feature type="active site" description="Proton acceptor" evidence="2 3">
    <location>
        <position position="168"/>
    </location>
</feature>
<feature type="binding site" evidence="2">
    <location>
        <begin position="44"/>
        <end position="52"/>
    </location>
    <ligand>
        <name>ATP</name>
        <dbReference type="ChEBI" id="CHEBI:30616"/>
    </ligand>
</feature>
<feature type="binding site" evidence="2">
    <location>
        <position position="67"/>
    </location>
    <ligand>
        <name>ATP</name>
        <dbReference type="ChEBI" id="CHEBI:30616"/>
    </ligand>
</feature>
<reference key="1">
    <citation type="journal article" date="2004" name="Nature">
        <title>Genome evolution in yeasts.</title>
        <authorList>
            <person name="Dujon B."/>
            <person name="Sherman D."/>
            <person name="Fischer G."/>
            <person name="Durrens P."/>
            <person name="Casaregola S."/>
            <person name="Lafontaine I."/>
            <person name="de Montigny J."/>
            <person name="Marck C."/>
            <person name="Neuveglise C."/>
            <person name="Talla E."/>
            <person name="Goffard N."/>
            <person name="Frangeul L."/>
            <person name="Aigle M."/>
            <person name="Anthouard V."/>
            <person name="Babour A."/>
            <person name="Barbe V."/>
            <person name="Barnay S."/>
            <person name="Blanchin S."/>
            <person name="Beckerich J.-M."/>
            <person name="Beyne E."/>
            <person name="Bleykasten C."/>
            <person name="Boisrame A."/>
            <person name="Boyer J."/>
            <person name="Cattolico L."/>
            <person name="Confanioleri F."/>
            <person name="de Daruvar A."/>
            <person name="Despons L."/>
            <person name="Fabre E."/>
            <person name="Fairhead C."/>
            <person name="Ferry-Dumazet H."/>
            <person name="Groppi A."/>
            <person name="Hantraye F."/>
            <person name="Hennequin C."/>
            <person name="Jauniaux N."/>
            <person name="Joyet P."/>
            <person name="Kachouri R."/>
            <person name="Kerrest A."/>
            <person name="Koszul R."/>
            <person name="Lemaire M."/>
            <person name="Lesur I."/>
            <person name="Ma L."/>
            <person name="Muller H."/>
            <person name="Nicaud J.-M."/>
            <person name="Nikolski M."/>
            <person name="Oztas S."/>
            <person name="Ozier-Kalogeropoulos O."/>
            <person name="Pellenz S."/>
            <person name="Potier S."/>
            <person name="Richard G.-F."/>
            <person name="Straub M.-L."/>
            <person name="Suleau A."/>
            <person name="Swennen D."/>
            <person name="Tekaia F."/>
            <person name="Wesolowski-Louvel M."/>
            <person name="Westhof E."/>
            <person name="Wirth B."/>
            <person name="Zeniou-Meyer M."/>
            <person name="Zivanovic Y."/>
            <person name="Bolotin-Fukuhara M."/>
            <person name="Thierry A."/>
            <person name="Bouchier C."/>
            <person name="Caudron B."/>
            <person name="Scarpelli C."/>
            <person name="Gaillardin C."/>
            <person name="Weissenbach J."/>
            <person name="Wincker P."/>
            <person name="Souciet J.-L."/>
        </authorList>
    </citation>
    <scope>NUCLEOTIDE SEQUENCE [LARGE SCALE GENOMIC DNA]</scope>
    <source>
        <strain>CLIB 122 / E 150</strain>
    </source>
</reference>
<accession>Q6C842</accession>
<proteinExistence type="inferred from homology"/>
<keyword id="KW-0067">ATP-binding</keyword>
<keyword id="KW-0418">Kinase</keyword>
<keyword id="KW-0547">Nucleotide-binding</keyword>
<keyword id="KW-0539">Nucleus</keyword>
<keyword id="KW-1185">Reference proteome</keyword>
<keyword id="KW-0723">Serine/threonine-protein kinase</keyword>
<keyword id="KW-0808">Transferase</keyword>
<name>BUR1_YARLI</name>
<protein>
    <recommendedName>
        <fullName>Serine/threonine-protein kinase BUR1</fullName>
        <ecNumber>2.7.11.22</ecNumber>
        <ecNumber>2.7.11.23</ecNumber>
    </recommendedName>
</protein>
<gene>
    <name type="primary">BUR1</name>
    <name type="ordered locus">YALI0D22935g</name>
</gene>
<organism>
    <name type="scientific">Yarrowia lipolytica (strain CLIB 122 / E 150)</name>
    <name type="common">Yeast</name>
    <name type="synonym">Candida lipolytica</name>
    <dbReference type="NCBI Taxonomy" id="284591"/>
    <lineage>
        <taxon>Eukaryota</taxon>
        <taxon>Fungi</taxon>
        <taxon>Dikarya</taxon>
        <taxon>Ascomycota</taxon>
        <taxon>Saccharomycotina</taxon>
        <taxon>Dipodascomycetes</taxon>
        <taxon>Dipodascales</taxon>
        <taxon>Dipodascales incertae sedis</taxon>
        <taxon>Yarrowia</taxon>
    </lineage>
</organism>
<comment type="function">
    <text evidence="1">Serine/threonine-protein kinase involved in transcription regulation. Phosphorylates the UBC2/RAD6 ubiquitin-conjugating enzyme (E2), leading to monoubiquitination of histone H2B and the silencing of telomeric-associated genes. Also required for histone H3 methylation. Necessary for the recovery from pheromone-induced growth arrest in the cell cycle G1 phase (By similarity).</text>
</comment>
<comment type="catalytic activity">
    <reaction>
        <text>L-seryl-[protein] + ATP = O-phospho-L-seryl-[protein] + ADP + H(+)</text>
        <dbReference type="Rhea" id="RHEA:17989"/>
        <dbReference type="Rhea" id="RHEA-COMP:9863"/>
        <dbReference type="Rhea" id="RHEA-COMP:11604"/>
        <dbReference type="ChEBI" id="CHEBI:15378"/>
        <dbReference type="ChEBI" id="CHEBI:29999"/>
        <dbReference type="ChEBI" id="CHEBI:30616"/>
        <dbReference type="ChEBI" id="CHEBI:83421"/>
        <dbReference type="ChEBI" id="CHEBI:456216"/>
        <dbReference type="EC" id="2.7.11.22"/>
    </reaction>
</comment>
<comment type="catalytic activity">
    <reaction>
        <text>L-threonyl-[protein] + ATP = O-phospho-L-threonyl-[protein] + ADP + H(+)</text>
        <dbReference type="Rhea" id="RHEA:46608"/>
        <dbReference type="Rhea" id="RHEA-COMP:11060"/>
        <dbReference type="Rhea" id="RHEA-COMP:11605"/>
        <dbReference type="ChEBI" id="CHEBI:15378"/>
        <dbReference type="ChEBI" id="CHEBI:30013"/>
        <dbReference type="ChEBI" id="CHEBI:30616"/>
        <dbReference type="ChEBI" id="CHEBI:61977"/>
        <dbReference type="ChEBI" id="CHEBI:456216"/>
        <dbReference type="EC" id="2.7.11.22"/>
    </reaction>
</comment>
<comment type="catalytic activity">
    <reaction>
        <text>[DNA-directed RNA polymerase] + ATP = phospho-[DNA-directed RNA polymerase] + ADP + H(+)</text>
        <dbReference type="Rhea" id="RHEA:10216"/>
        <dbReference type="Rhea" id="RHEA-COMP:11321"/>
        <dbReference type="Rhea" id="RHEA-COMP:11322"/>
        <dbReference type="ChEBI" id="CHEBI:15378"/>
        <dbReference type="ChEBI" id="CHEBI:30616"/>
        <dbReference type="ChEBI" id="CHEBI:43176"/>
        <dbReference type="ChEBI" id="CHEBI:68546"/>
        <dbReference type="ChEBI" id="CHEBI:456216"/>
        <dbReference type="EC" id="2.7.11.23"/>
    </reaction>
</comment>
<comment type="subcellular location">
    <subcellularLocation>
        <location evidence="1">Nucleus</location>
    </subcellularLocation>
</comment>
<comment type="similarity">
    <text evidence="5">Belongs to the protein kinase superfamily. CMGC Ser/Thr protein kinase family. CDC2/CDKX subfamily.</text>
</comment>
<sequence length="706" mass="81855">MHGQPHQHLHTSPTAPFNMTIPYQPSTYYGCSNVTESYKPLGKIGEGTFGEVFRAEQITTKRHVALKKILLHSEKEGFPVTALREIRILKLLRHENVIPLVDLAVERGDQSKKERGCVYMVTPYMDHDLAGLLGNQSVQLSPAHIKCYMLQLLEGIGYLHAKKFLHRDIKAANILVNDQGILKLADFGLARGYDGPAPNSQTAGVNTENLTAMVVTRWYRPPELILGDRKYTTAIDMWGIGCVFGEFFTRKPIFPGASDVDQGSKIFQAVGVPTEDTMPGWSVLPGAQNSNIWGTDATNKLDKLFGRLSKDGLDFLKGLLLLDPTKRLTAIGGKNHAYFKTEPLPCQPHELPKWQSSHELDNHKRREQEKNESKVQPPPREKQPPVREPRDRDRSRDSRPPRERDSRDRRPPRGRYDSFERPERRPEGPRDGPRDRDRDEYPRELPPRDLPPRDLPPRDRDYPPRERDWDRRPPPRDRDYPPRERDYPPRDSRDRDYHPRDRDYPPRDSRDYPRDSRDSRDSRPISPSRERFHKRPQFDMYSDTDYDRERDEDDRRRRPLPRDSSRDMTRDVYVPSRGREPRELPKGPPPAPGDKVEDKGESHNKDDKPCDTENPRDSDKSRDLGPPPGPPLPADGPPPPPSSNPPRPSETYGGSRPPWRRDSRDRRESRDRDGRDRDGRDRRLSSSRYARDEFDEYGRKRPRIER</sequence>